<protein>
    <recommendedName>
        <fullName evidence="1">Small ribosomal subunit protein uS8</fullName>
    </recommendedName>
    <alternativeName>
        <fullName evidence="2">30S ribosomal protein S8</fullName>
    </alternativeName>
</protein>
<keyword id="KW-1185">Reference proteome</keyword>
<keyword id="KW-0687">Ribonucleoprotein</keyword>
<keyword id="KW-0689">Ribosomal protein</keyword>
<keyword id="KW-0694">RNA-binding</keyword>
<keyword id="KW-0699">rRNA-binding</keyword>
<reference key="1">
    <citation type="submission" date="2003-06" db="EMBL/GenBank/DDBJ databases">
        <title>The complete genome sequence of Haemophilus ducreyi.</title>
        <authorList>
            <person name="Munson R.S. Jr."/>
            <person name="Ray W.C."/>
            <person name="Mahairas G."/>
            <person name="Sabo P."/>
            <person name="Mungur R."/>
            <person name="Johnson L."/>
            <person name="Nguyen D."/>
            <person name="Wang J."/>
            <person name="Forst C."/>
            <person name="Hood L."/>
        </authorList>
    </citation>
    <scope>NUCLEOTIDE SEQUENCE [LARGE SCALE GENOMIC DNA]</scope>
    <source>
        <strain>35000HP / ATCC 700724</strain>
    </source>
</reference>
<organism>
    <name type="scientific">Haemophilus ducreyi (strain 35000HP / ATCC 700724)</name>
    <dbReference type="NCBI Taxonomy" id="233412"/>
    <lineage>
        <taxon>Bacteria</taxon>
        <taxon>Pseudomonadati</taxon>
        <taxon>Pseudomonadota</taxon>
        <taxon>Gammaproteobacteria</taxon>
        <taxon>Pasteurellales</taxon>
        <taxon>Pasteurellaceae</taxon>
        <taxon>Haemophilus</taxon>
    </lineage>
</organism>
<proteinExistence type="inferred from homology"/>
<feature type="chain" id="PRO_0000126416" description="Small ribosomal subunit protein uS8">
    <location>
        <begin position="1"/>
        <end position="130"/>
    </location>
</feature>
<evidence type="ECO:0000255" key="1">
    <source>
        <dbReference type="HAMAP-Rule" id="MF_01302"/>
    </source>
</evidence>
<evidence type="ECO:0000305" key="2"/>
<accession>Q7VKE7</accession>
<name>RS8_HAEDU</name>
<comment type="function">
    <text evidence="1">One of the primary rRNA binding proteins, it binds directly to 16S rRNA central domain where it helps coordinate assembly of the platform of the 30S subunit.</text>
</comment>
<comment type="subunit">
    <text evidence="1">Part of the 30S ribosomal subunit. Contacts proteins S5 and S12.</text>
</comment>
<comment type="similarity">
    <text evidence="1">Belongs to the universal ribosomal protein uS8 family.</text>
</comment>
<gene>
    <name evidence="1" type="primary">rpsH</name>
    <name type="ordered locus">HD_1964</name>
</gene>
<dbReference type="EMBL" id="AE017143">
    <property type="protein sequence ID" value="AAP96682.1"/>
    <property type="molecule type" value="Genomic_DNA"/>
</dbReference>
<dbReference type="RefSeq" id="WP_010945708.1">
    <property type="nucleotide sequence ID" value="NC_002940.2"/>
</dbReference>
<dbReference type="SMR" id="Q7VKE7"/>
<dbReference type="STRING" id="233412.HD_1964"/>
<dbReference type="KEGG" id="hdu:HD_1964"/>
<dbReference type="eggNOG" id="COG0096">
    <property type="taxonomic scope" value="Bacteria"/>
</dbReference>
<dbReference type="HOGENOM" id="CLU_098428_0_0_6"/>
<dbReference type="OrthoDB" id="9802617at2"/>
<dbReference type="Proteomes" id="UP000001022">
    <property type="component" value="Chromosome"/>
</dbReference>
<dbReference type="GO" id="GO:1990904">
    <property type="term" value="C:ribonucleoprotein complex"/>
    <property type="evidence" value="ECO:0007669"/>
    <property type="project" value="UniProtKB-KW"/>
</dbReference>
<dbReference type="GO" id="GO:0005840">
    <property type="term" value="C:ribosome"/>
    <property type="evidence" value="ECO:0007669"/>
    <property type="project" value="UniProtKB-KW"/>
</dbReference>
<dbReference type="GO" id="GO:0019843">
    <property type="term" value="F:rRNA binding"/>
    <property type="evidence" value="ECO:0007669"/>
    <property type="project" value="UniProtKB-UniRule"/>
</dbReference>
<dbReference type="GO" id="GO:0003735">
    <property type="term" value="F:structural constituent of ribosome"/>
    <property type="evidence" value="ECO:0007669"/>
    <property type="project" value="InterPro"/>
</dbReference>
<dbReference type="GO" id="GO:0006412">
    <property type="term" value="P:translation"/>
    <property type="evidence" value="ECO:0007669"/>
    <property type="project" value="UniProtKB-UniRule"/>
</dbReference>
<dbReference type="FunFam" id="3.30.1370.30:FF:000003">
    <property type="entry name" value="30S ribosomal protein S8"/>
    <property type="match status" value="1"/>
</dbReference>
<dbReference type="FunFam" id="3.30.1490.10:FF:000001">
    <property type="entry name" value="30S ribosomal protein S8"/>
    <property type="match status" value="1"/>
</dbReference>
<dbReference type="Gene3D" id="3.30.1370.30">
    <property type="match status" value="1"/>
</dbReference>
<dbReference type="Gene3D" id="3.30.1490.10">
    <property type="match status" value="1"/>
</dbReference>
<dbReference type="HAMAP" id="MF_01302_B">
    <property type="entry name" value="Ribosomal_uS8_B"/>
    <property type="match status" value="1"/>
</dbReference>
<dbReference type="InterPro" id="IPR000630">
    <property type="entry name" value="Ribosomal_uS8"/>
</dbReference>
<dbReference type="InterPro" id="IPR047863">
    <property type="entry name" value="Ribosomal_uS8_CS"/>
</dbReference>
<dbReference type="InterPro" id="IPR035987">
    <property type="entry name" value="Ribosomal_uS8_sf"/>
</dbReference>
<dbReference type="NCBIfam" id="NF001109">
    <property type="entry name" value="PRK00136.1"/>
    <property type="match status" value="1"/>
</dbReference>
<dbReference type="PANTHER" id="PTHR11758">
    <property type="entry name" value="40S RIBOSOMAL PROTEIN S15A"/>
    <property type="match status" value="1"/>
</dbReference>
<dbReference type="Pfam" id="PF00410">
    <property type="entry name" value="Ribosomal_S8"/>
    <property type="match status" value="1"/>
</dbReference>
<dbReference type="SUPFAM" id="SSF56047">
    <property type="entry name" value="Ribosomal protein S8"/>
    <property type="match status" value="1"/>
</dbReference>
<dbReference type="PROSITE" id="PS00053">
    <property type="entry name" value="RIBOSOMAL_S8"/>
    <property type="match status" value="1"/>
</dbReference>
<sequence>MSMQDPIADMLTRIRNGQAANKVAISMPSSKLKVAIANVLAKEGYVESFRIIEDSKPELEITLKYFQNKPVVESIQRISRPGIRIYKRKDELPKVMGGLGIAIVSTSKGVMTDRAAREEGLGGEIICYVA</sequence>